<protein>
    <recommendedName>
        <fullName evidence="1">Alcohol dehydrogenase</fullName>
        <ecNumber>1.1.1.1</ecNumber>
    </recommendedName>
</protein>
<feature type="initiator methionine" description="Removed" evidence="1">
    <location>
        <position position="1"/>
    </location>
</feature>
<feature type="chain" id="PRO_0000352752" description="Alcohol dehydrogenase" evidence="1">
    <location>
        <begin position="2"/>
        <end position="256"/>
    </location>
</feature>
<feature type="active site" description="Proton acceptor" evidence="1 3">
    <location>
        <position position="153"/>
    </location>
</feature>
<feature type="binding site" evidence="1">
    <location>
        <begin position="12"/>
        <end position="41"/>
    </location>
    <ligand>
        <name>NAD(+)</name>
        <dbReference type="ChEBI" id="CHEBI:57540"/>
    </ligand>
</feature>
<feature type="binding site" evidence="1">
    <location>
        <position position="140"/>
    </location>
    <ligand>
        <name>substrate</name>
    </ligand>
</feature>
<reference evidence="8" key="1">
    <citation type="journal article" date="2005" name="Genetics">
        <title>A novel chimeric gene, siren, with retroposed promoter sequence in the Drosophila bipectinata complex.</title>
        <authorList>
            <person name="Nozawa M."/>
            <person name="Aotsuka T."/>
            <person name="Tamura K."/>
        </authorList>
    </citation>
    <scope>NUCLEOTIDE SEQUENCE [GENOMIC DNA]</scope>
</reference>
<reference evidence="7" key="2">
    <citation type="submission" date="2008-07" db="EMBL/GenBank/DDBJ databases">
        <title>Patterns of amino acid evolution in Drosophila ananassae chimeric gene, siren, parallel those of other Adh derived chimeras.</title>
        <authorList>
            <person name="Jones C.D."/>
            <person name="Shih H.-J."/>
        </authorList>
    </citation>
    <scope>NUCLEOTIDE SEQUENCE [GENOMIC DNA]</scope>
</reference>
<reference evidence="9" key="3">
    <citation type="journal article" date="2007" name="Nature">
        <title>Evolution of genes and genomes on the Drosophila phylogeny.</title>
        <authorList>
            <consortium name="Drosophila 12 genomes consortium"/>
        </authorList>
    </citation>
    <scope>NUCLEOTIDE SEQUENCE [LARGE SCALE GENOMIC DNA]</scope>
    <source>
        <strain evidence="4">Tucson 14024-0371.13</strain>
    </source>
</reference>
<reference evidence="6" key="4">
    <citation type="journal article" date="2002" name="Biol. J. Linn. Soc. Lond.">
        <title>Phylogeny of a paradigm lineage: the Drosophila melanogaster species group (Diptera: Drosophilidae).</title>
        <authorList>
            <person name="Schawaroch V.A."/>
        </authorList>
        <dbReference type="AGRICOLA" id="IND23292123"/>
    </citation>
    <scope>NUCLEOTIDE SEQUENCE [GENOMIC DNA] OF 50-145</scope>
</reference>
<name>ADH_DROAN</name>
<keyword id="KW-0520">NAD</keyword>
<keyword id="KW-0560">Oxidoreductase</keyword>
<keyword id="KW-1185">Reference proteome</keyword>
<evidence type="ECO:0000250" key="1">
    <source>
        <dbReference type="UniProtKB" id="P00334"/>
    </source>
</evidence>
<evidence type="ECO:0000255" key="2"/>
<evidence type="ECO:0000255" key="3">
    <source>
        <dbReference type="PROSITE-ProRule" id="PRU10001"/>
    </source>
</evidence>
<evidence type="ECO:0000269" key="4">
    <source>
    </source>
</evidence>
<evidence type="ECO:0000305" key="5"/>
<evidence type="ECO:0000312" key="6">
    <source>
        <dbReference type="EMBL" id="AAM28691.1"/>
    </source>
</evidence>
<evidence type="ECO:0000312" key="7">
    <source>
        <dbReference type="EMBL" id="ACF95828.1"/>
    </source>
</evidence>
<evidence type="ECO:0000312" key="8">
    <source>
        <dbReference type="EMBL" id="BAD98197.1"/>
    </source>
</evidence>
<evidence type="ECO:0000312" key="9">
    <source>
        <dbReference type="EMBL" id="EDV30743.1"/>
    </source>
</evidence>
<accession>Q50L96</accession>
<accession>Q8N0A0</accession>
<comment type="catalytic activity">
    <reaction evidence="3 5">
        <text>a primary alcohol + NAD(+) = an aldehyde + NADH + H(+)</text>
        <dbReference type="Rhea" id="RHEA:10736"/>
        <dbReference type="ChEBI" id="CHEBI:15378"/>
        <dbReference type="ChEBI" id="CHEBI:15734"/>
        <dbReference type="ChEBI" id="CHEBI:17478"/>
        <dbReference type="ChEBI" id="CHEBI:57540"/>
        <dbReference type="ChEBI" id="CHEBI:57945"/>
        <dbReference type="EC" id="1.1.1.1"/>
    </reaction>
</comment>
<comment type="catalytic activity">
    <reaction evidence="3 5">
        <text>a secondary alcohol + NAD(+) = a ketone + NADH + H(+)</text>
        <dbReference type="Rhea" id="RHEA:10740"/>
        <dbReference type="ChEBI" id="CHEBI:15378"/>
        <dbReference type="ChEBI" id="CHEBI:17087"/>
        <dbReference type="ChEBI" id="CHEBI:35681"/>
        <dbReference type="ChEBI" id="CHEBI:57540"/>
        <dbReference type="ChEBI" id="CHEBI:57945"/>
        <dbReference type="EC" id="1.1.1.1"/>
    </reaction>
</comment>
<comment type="subunit">
    <text evidence="5">Homodimer.</text>
</comment>
<comment type="similarity">
    <text evidence="2">Belongs to the short-chain dehydrogenases/reductases (SDR) family.</text>
</comment>
<gene>
    <name evidence="8" type="primary">Adh</name>
    <name type="ORF">GF14888</name>
</gene>
<dbReference type="EC" id="1.1.1.1"/>
<dbReference type="EMBL" id="AB194426">
    <property type="protein sequence ID" value="BAD98197.1"/>
    <property type="molecule type" value="Genomic_DNA"/>
</dbReference>
<dbReference type="EMBL" id="EU877943">
    <property type="protein sequence ID" value="ACF95828.1"/>
    <property type="molecule type" value="Genomic_DNA"/>
</dbReference>
<dbReference type="EMBL" id="CH902620">
    <property type="protein sequence ID" value="EDV30743.1"/>
    <property type="molecule type" value="Genomic_DNA"/>
</dbReference>
<dbReference type="EMBL" id="AF459754">
    <property type="protein sequence ID" value="AAM28691.1"/>
    <property type="molecule type" value="Genomic_DNA"/>
</dbReference>
<dbReference type="SMR" id="Q50L96"/>
<dbReference type="FunCoup" id="Q50L96">
    <property type="interactions" value="313"/>
</dbReference>
<dbReference type="STRING" id="7217.Q50L96"/>
<dbReference type="EnsemblMetazoa" id="FBtr0119588">
    <property type="protein sequence ID" value="FBpp0118080"/>
    <property type="gene ID" value="FBgn0012113"/>
</dbReference>
<dbReference type="EnsemblMetazoa" id="XM_001961486.4">
    <property type="protein sequence ID" value="XP_001961522.1"/>
    <property type="gene ID" value="LOC6492907"/>
</dbReference>
<dbReference type="GeneID" id="6492907"/>
<dbReference type="KEGG" id="dan:6492907"/>
<dbReference type="eggNOG" id="KOG4169">
    <property type="taxonomic scope" value="Eukaryota"/>
</dbReference>
<dbReference type="HOGENOM" id="CLU_010194_2_16_1"/>
<dbReference type="InParanoid" id="Q50L96"/>
<dbReference type="OMA" id="WSKHWDS"/>
<dbReference type="OrthoDB" id="417891at2759"/>
<dbReference type="PhylomeDB" id="Q50L96"/>
<dbReference type="ChiTaRS" id="Adh">
    <property type="organism name" value="fly"/>
</dbReference>
<dbReference type="Proteomes" id="UP000007801">
    <property type="component" value="Unassembled WGS sequence"/>
</dbReference>
<dbReference type="GO" id="GO:0005829">
    <property type="term" value="C:cytosol"/>
    <property type="evidence" value="ECO:0007669"/>
    <property type="project" value="EnsemblMetazoa"/>
</dbReference>
<dbReference type="GO" id="GO:0004022">
    <property type="term" value="F:alcohol dehydrogenase (NAD+) activity"/>
    <property type="evidence" value="ECO:0000250"/>
    <property type="project" value="UniProtKB"/>
</dbReference>
<dbReference type="GO" id="GO:0004029">
    <property type="term" value="F:aldehyde dehydrogenase (NAD+) activity"/>
    <property type="evidence" value="ECO:0007669"/>
    <property type="project" value="EnsemblMetazoa"/>
</dbReference>
<dbReference type="GO" id="GO:0042803">
    <property type="term" value="F:protein homodimerization activity"/>
    <property type="evidence" value="ECO:0007669"/>
    <property type="project" value="EnsemblMetazoa"/>
</dbReference>
<dbReference type="GO" id="GO:0006117">
    <property type="term" value="P:acetaldehyde metabolic process"/>
    <property type="evidence" value="ECO:0007669"/>
    <property type="project" value="EnsemblMetazoa"/>
</dbReference>
<dbReference type="GO" id="GO:0019431">
    <property type="term" value="P:acetyl-CoA biosynthetic process from ethanol"/>
    <property type="evidence" value="ECO:0007669"/>
    <property type="project" value="EnsemblMetazoa"/>
</dbReference>
<dbReference type="GO" id="GO:0046164">
    <property type="term" value="P:alcohol catabolic process"/>
    <property type="evidence" value="ECO:0000250"/>
    <property type="project" value="UniProtKB"/>
</dbReference>
<dbReference type="GO" id="GO:0048149">
    <property type="term" value="P:behavioral response to ethanol"/>
    <property type="evidence" value="ECO:0007669"/>
    <property type="project" value="EnsemblMetazoa"/>
</dbReference>
<dbReference type="GO" id="GO:0006734">
    <property type="term" value="P:NADH metabolic process"/>
    <property type="evidence" value="ECO:0007669"/>
    <property type="project" value="EnsemblMetazoa"/>
</dbReference>
<dbReference type="CDD" id="cd05323">
    <property type="entry name" value="ADH_SDR_c_like"/>
    <property type="match status" value="1"/>
</dbReference>
<dbReference type="FunFam" id="3.40.50.720:FF:000302">
    <property type="entry name" value="Alcohol dehydrogenase"/>
    <property type="match status" value="1"/>
</dbReference>
<dbReference type="Gene3D" id="3.40.50.720">
    <property type="entry name" value="NAD(P)-binding Rossmann-like Domain"/>
    <property type="match status" value="1"/>
</dbReference>
<dbReference type="InterPro" id="IPR002425">
    <property type="entry name" value="ADH_Drosophila-type"/>
</dbReference>
<dbReference type="InterPro" id="IPR036291">
    <property type="entry name" value="NAD(P)-bd_dom_sf"/>
</dbReference>
<dbReference type="InterPro" id="IPR020904">
    <property type="entry name" value="Sc_DH/Rdtase_CS"/>
</dbReference>
<dbReference type="InterPro" id="IPR002347">
    <property type="entry name" value="SDR_fam"/>
</dbReference>
<dbReference type="PANTHER" id="PTHR42901">
    <property type="entry name" value="ALCOHOL DEHYDROGENASE"/>
    <property type="match status" value="1"/>
</dbReference>
<dbReference type="PANTHER" id="PTHR42901:SF1">
    <property type="entry name" value="ALCOHOL DEHYDROGENASE"/>
    <property type="match status" value="1"/>
</dbReference>
<dbReference type="Pfam" id="PF00106">
    <property type="entry name" value="adh_short"/>
    <property type="match status" value="1"/>
</dbReference>
<dbReference type="PRINTS" id="PR01168">
    <property type="entry name" value="ALCDHDRGNASE"/>
</dbReference>
<dbReference type="PRINTS" id="PR01167">
    <property type="entry name" value="INSADHFAMILY"/>
</dbReference>
<dbReference type="PRINTS" id="PR00080">
    <property type="entry name" value="SDRFAMILY"/>
</dbReference>
<dbReference type="SUPFAM" id="SSF51735">
    <property type="entry name" value="NAD(P)-binding Rossmann-fold domains"/>
    <property type="match status" value="1"/>
</dbReference>
<dbReference type="PROSITE" id="PS00061">
    <property type="entry name" value="ADH_SHORT"/>
    <property type="match status" value="1"/>
</dbReference>
<proteinExistence type="inferred from homology"/>
<sequence>MALSLTNKNVVFVAGLGGIGLDTTKELLKRDLKNLVILDRIDNPVVIAELKTINPKVTVTFIPYDVTVPITETKKLLKTIFDKLKTVDILINGAGILDDHQIERTIAVNYTGLVNTTTAILDFWDKRKGGPGGIICNIGSVTGFNAIYQVPVYSGTKAAVVNFTSSLAKLAPITGVTAYTVNPGITRTTLVHKFNSWLDVEPQVAEKLLAHPTQSSQACGENFVKAIELNQNGAIWKLDRGTLEAIQWSKHWDSGI</sequence>
<organism>
    <name type="scientific">Drosophila ananassae</name>
    <name type="common">Fruit fly</name>
    <dbReference type="NCBI Taxonomy" id="7217"/>
    <lineage>
        <taxon>Eukaryota</taxon>
        <taxon>Metazoa</taxon>
        <taxon>Ecdysozoa</taxon>
        <taxon>Arthropoda</taxon>
        <taxon>Hexapoda</taxon>
        <taxon>Insecta</taxon>
        <taxon>Pterygota</taxon>
        <taxon>Neoptera</taxon>
        <taxon>Endopterygota</taxon>
        <taxon>Diptera</taxon>
        <taxon>Brachycera</taxon>
        <taxon>Muscomorpha</taxon>
        <taxon>Ephydroidea</taxon>
        <taxon>Drosophilidae</taxon>
        <taxon>Drosophila</taxon>
        <taxon>Sophophora</taxon>
    </lineage>
</organism>